<keyword id="KW-0614">Plasmid</keyword>
<keyword id="KW-1185">Reference proteome</keyword>
<organism>
    <name type="scientific">Sinorhizobium fredii (strain NBRC 101917 / NGR234)</name>
    <dbReference type="NCBI Taxonomy" id="394"/>
    <lineage>
        <taxon>Bacteria</taxon>
        <taxon>Pseudomonadati</taxon>
        <taxon>Pseudomonadota</taxon>
        <taxon>Alphaproteobacteria</taxon>
        <taxon>Hyphomicrobiales</taxon>
        <taxon>Rhizobiaceae</taxon>
        <taxon>Sinorhizobium/Ensifer group</taxon>
        <taxon>Sinorhizobium</taxon>
    </lineage>
</organism>
<accession>P55586</accession>
<feature type="chain" id="PRO_0000200922" description="Uncharacterized protein y4oA">
    <location>
        <begin position="1"/>
        <end position="593"/>
    </location>
</feature>
<reference key="1">
    <citation type="journal article" date="1997" name="Nature">
        <title>Molecular basis of symbiosis between Rhizobium and legumes.</title>
        <authorList>
            <person name="Freiberg C.A."/>
            <person name="Fellay R."/>
            <person name="Bairoch A."/>
            <person name="Broughton W.J."/>
            <person name="Rosenthal A."/>
            <person name="Perret X."/>
        </authorList>
    </citation>
    <scope>NUCLEOTIDE SEQUENCE [LARGE SCALE GENOMIC DNA]</scope>
    <source>
        <strain>NBRC 101917 / NGR234</strain>
    </source>
</reference>
<reference key="2">
    <citation type="journal article" date="2009" name="Appl. Environ. Microbiol.">
        <title>Rhizobium sp. strain NGR234 possesses a remarkable number of secretion systems.</title>
        <authorList>
            <person name="Schmeisser C."/>
            <person name="Liesegang H."/>
            <person name="Krysciak D."/>
            <person name="Bakkou N."/>
            <person name="Le Quere A."/>
            <person name="Wollherr A."/>
            <person name="Heinemeyer I."/>
            <person name="Morgenstern B."/>
            <person name="Pommerening-Roeser A."/>
            <person name="Flores M."/>
            <person name="Palacios R."/>
            <person name="Brenner S."/>
            <person name="Gottschalk G."/>
            <person name="Schmitz R.A."/>
            <person name="Broughton W.J."/>
            <person name="Perret X."/>
            <person name="Strittmatter A.W."/>
            <person name="Streit W.R."/>
        </authorList>
    </citation>
    <scope>NUCLEOTIDE SEQUENCE [LARGE SCALE GENOMIC DNA]</scope>
    <source>
        <strain>NBRC 101917 / NGR234</strain>
    </source>
</reference>
<gene>
    <name type="ordered locus">NGR_a02280</name>
    <name type="ORF">y4oA</name>
</gene>
<sequence length="593" mass="65216">MNVLKRGSDQDNWWQAYPGLYARELAAYEGHGASHRPLIQQDGTLILEVLWPMDSAGSIRLNVGYSPLHPFCRPSISAPELQLERHQNPFTRDLCLLTQDSAQWYPHQMVADFIAERLSQVLQVMTLRRNEQWSEAASLEEQAPDPVTPYHMHVAEEYSAVFFDGQQTVPNAPLGTAVFLLQDRLERGRSPPFQAILSKVEPLSGTWMAKPFDLPKRAGPWKNVIGRWIRLEPPFPEAPEEILAAAEKAIERQSALFPAHLKKLGSIADDDLSITAVVFQEELSYGPDNKGNGWFFLVSRRVPGSRRRQVSLVRGYRLSSDMLSRLPVASALKSKKVVLVGCGAIGSFAAVELARSGVGQLTIIDFDLVEPGNTVRWALGRSVWGLPKTTALHDFLYHNYPWTNVGRGHAKVGSAISNVDDVRKLEGNPMRWLRALIEDADIVVDTSASTECQGALAYMCRSIGKRYVLGHATEGAAGGVVARFKPGAPGCYVCLQQHWSGKTLPLPTIDSSGTIVPTGCNAPTFTGGAFDLQEVSMEVVRSTIGLLAPDVYDSGDWQLSILDLTENGRRILPRWKAETIAPHSSCSCGASQG</sequence>
<dbReference type="EMBL" id="U00090">
    <property type="protein sequence ID" value="AAB91794.1"/>
    <property type="molecule type" value="Genomic_DNA"/>
</dbReference>
<dbReference type="RefSeq" id="NP_443997.1">
    <property type="nucleotide sequence ID" value="NC_000914.2"/>
</dbReference>
<dbReference type="RefSeq" id="WP_010875255.1">
    <property type="nucleotide sequence ID" value="NC_000914.2"/>
</dbReference>
<dbReference type="SMR" id="P55586"/>
<dbReference type="KEGG" id="rhi:NGR_a02280"/>
<dbReference type="PATRIC" id="fig|394.7.peg.241"/>
<dbReference type="eggNOG" id="COG0476">
    <property type="taxonomic scope" value="Bacteria"/>
</dbReference>
<dbReference type="HOGENOM" id="CLU_467590_0_0_5"/>
<dbReference type="OrthoDB" id="9804150at2"/>
<dbReference type="Proteomes" id="UP000001054">
    <property type="component" value="Plasmid pNGR234a"/>
</dbReference>
<dbReference type="GO" id="GO:0061503">
    <property type="term" value="F:tRNA threonylcarbamoyladenosine dehydratase"/>
    <property type="evidence" value="ECO:0007669"/>
    <property type="project" value="TreeGrafter"/>
</dbReference>
<dbReference type="GO" id="GO:0008641">
    <property type="term" value="F:ubiquitin-like modifier activating enzyme activity"/>
    <property type="evidence" value="ECO:0007669"/>
    <property type="project" value="InterPro"/>
</dbReference>
<dbReference type="GO" id="GO:0061504">
    <property type="term" value="P:cyclic threonylcarbamoyladenosine biosynthetic process"/>
    <property type="evidence" value="ECO:0007669"/>
    <property type="project" value="TreeGrafter"/>
</dbReference>
<dbReference type="CDD" id="cd01483">
    <property type="entry name" value="E1_enzyme_family"/>
    <property type="match status" value="1"/>
</dbReference>
<dbReference type="Gene3D" id="3.40.50.720">
    <property type="entry name" value="NAD(P)-binding Rossmann-like Domain"/>
    <property type="match status" value="1"/>
</dbReference>
<dbReference type="InterPro" id="IPR045886">
    <property type="entry name" value="ThiF/MoeB/HesA"/>
</dbReference>
<dbReference type="InterPro" id="IPR000594">
    <property type="entry name" value="ThiF_NAD_FAD-bd"/>
</dbReference>
<dbReference type="InterPro" id="IPR035985">
    <property type="entry name" value="Ubiquitin-activating_enz"/>
</dbReference>
<dbReference type="PANTHER" id="PTHR43267:SF3">
    <property type="entry name" value="THIF PROTEIN"/>
    <property type="match status" value="1"/>
</dbReference>
<dbReference type="PANTHER" id="PTHR43267">
    <property type="entry name" value="TRNA THREONYLCARBAMOYLADENOSINE DEHYDRATASE"/>
    <property type="match status" value="1"/>
</dbReference>
<dbReference type="Pfam" id="PF00899">
    <property type="entry name" value="ThiF"/>
    <property type="match status" value="1"/>
</dbReference>
<dbReference type="SUPFAM" id="SSF69572">
    <property type="entry name" value="Activating enzymes of the ubiquitin-like proteins"/>
    <property type="match status" value="1"/>
</dbReference>
<proteinExistence type="predicted"/>
<geneLocation type="plasmid">
    <name>sym pNGR234a</name>
</geneLocation>
<name>Y4OA_SINFN</name>
<protein>
    <recommendedName>
        <fullName>Uncharacterized protein y4oA</fullName>
    </recommendedName>
</protein>